<name>PRSA_STAAM</name>
<comment type="function">
    <text evidence="1">Plays a major role in protein secretion by helping the post-translocational extracellular folding of several secreted proteins.</text>
</comment>
<comment type="catalytic activity">
    <reaction evidence="1">
        <text>[protein]-peptidylproline (omega=180) = [protein]-peptidylproline (omega=0)</text>
        <dbReference type="Rhea" id="RHEA:16237"/>
        <dbReference type="Rhea" id="RHEA-COMP:10747"/>
        <dbReference type="Rhea" id="RHEA-COMP:10748"/>
        <dbReference type="ChEBI" id="CHEBI:83833"/>
        <dbReference type="ChEBI" id="CHEBI:83834"/>
        <dbReference type="EC" id="5.2.1.8"/>
    </reaction>
</comment>
<comment type="subcellular location">
    <subcellularLocation>
        <location evidence="1">Cell membrane</location>
        <topology evidence="1">Lipid-anchor</topology>
    </subcellularLocation>
</comment>
<comment type="similarity">
    <text evidence="1">Belongs to the PrsA family.</text>
</comment>
<sequence length="320" mass="35638">MKMINKLIVPVTASALLLGACGASATDSKENTLISSKAGDVTVADTMKKIGKDQIANASFTEMLNKILADKYKNKVNDKKIDEQIEKMQKQYGGKDKFEKALQQQGLTADKYKENLRTAAYHKELLSDKIKISDSEIKEDSKKASHILIKVKSKKSDKEGLDDKEAKQKAEEIQKEVSKDPSKFGEIAKKESMDTGSAKKDGELGYVLKGQTDKDFEKALFKLKDGEVSEVVKSSFGYHIIKADKPTDFNSEKQSLKEKLVDQKVQKNPKLLTDAYKDLLKEYDVDFKDRDIKSVVEDKILNPEKLKQGGAQGGQSGMSQ</sequence>
<accession>P60747</accession>
<accession>Q99T36</accession>
<proteinExistence type="evidence at protein level"/>
<dbReference type="EC" id="5.2.1.8" evidence="1"/>
<dbReference type="EMBL" id="BA000017">
    <property type="protein sequence ID" value="BAB58003.1"/>
    <property type="molecule type" value="Genomic_DNA"/>
</dbReference>
<dbReference type="RefSeq" id="WP_000782121.1">
    <property type="nucleotide sequence ID" value="NC_002758.2"/>
</dbReference>
<dbReference type="PDB" id="2JZV">
    <property type="method" value="NMR"/>
    <property type="chains" value="A=140-245"/>
</dbReference>
<dbReference type="PDBsum" id="2JZV"/>
<dbReference type="BMRB" id="P60747"/>
<dbReference type="SMR" id="P60747"/>
<dbReference type="KEGG" id="sav:SAV1841"/>
<dbReference type="HOGENOM" id="CLU_034646_6_2_9"/>
<dbReference type="PhylomeDB" id="P60747"/>
<dbReference type="EvolutionaryTrace" id="P60747"/>
<dbReference type="Proteomes" id="UP000002481">
    <property type="component" value="Chromosome"/>
</dbReference>
<dbReference type="GO" id="GO:0005886">
    <property type="term" value="C:plasma membrane"/>
    <property type="evidence" value="ECO:0007669"/>
    <property type="project" value="UniProtKB-SubCell"/>
</dbReference>
<dbReference type="GO" id="GO:0003755">
    <property type="term" value="F:peptidyl-prolyl cis-trans isomerase activity"/>
    <property type="evidence" value="ECO:0007669"/>
    <property type="project" value="UniProtKB-UniRule"/>
</dbReference>
<dbReference type="GO" id="GO:0006457">
    <property type="term" value="P:protein folding"/>
    <property type="evidence" value="ECO:0007669"/>
    <property type="project" value="UniProtKB-UniRule"/>
</dbReference>
<dbReference type="Gene3D" id="3.10.50.40">
    <property type="match status" value="1"/>
</dbReference>
<dbReference type="Gene3D" id="1.10.4030.10">
    <property type="entry name" value="Porin chaperone SurA, peptide-binding domain"/>
    <property type="match status" value="1"/>
</dbReference>
<dbReference type="HAMAP" id="MF_01145">
    <property type="entry name" value="Foldase_PrsA"/>
    <property type="match status" value="1"/>
</dbReference>
<dbReference type="InterPro" id="IPR023059">
    <property type="entry name" value="Foldase_PrsA"/>
</dbReference>
<dbReference type="InterPro" id="IPR046357">
    <property type="entry name" value="PPIase_dom_sf"/>
</dbReference>
<dbReference type="InterPro" id="IPR000297">
    <property type="entry name" value="PPIase_PpiC"/>
</dbReference>
<dbReference type="InterPro" id="IPR050245">
    <property type="entry name" value="PrsA_foldase"/>
</dbReference>
<dbReference type="InterPro" id="IPR027304">
    <property type="entry name" value="Trigger_fact/SurA_dom_sf"/>
</dbReference>
<dbReference type="PANTHER" id="PTHR47245:SF1">
    <property type="entry name" value="FOLDASE PROTEIN PRSA"/>
    <property type="match status" value="1"/>
</dbReference>
<dbReference type="PANTHER" id="PTHR47245">
    <property type="entry name" value="PEPTIDYLPROLYL ISOMERASE"/>
    <property type="match status" value="1"/>
</dbReference>
<dbReference type="Pfam" id="PF00639">
    <property type="entry name" value="Rotamase"/>
    <property type="match status" value="1"/>
</dbReference>
<dbReference type="SUPFAM" id="SSF54534">
    <property type="entry name" value="FKBP-like"/>
    <property type="match status" value="1"/>
</dbReference>
<dbReference type="SUPFAM" id="SSF109998">
    <property type="entry name" value="Triger factor/SurA peptide-binding domain-like"/>
    <property type="match status" value="1"/>
</dbReference>
<dbReference type="PROSITE" id="PS50198">
    <property type="entry name" value="PPIC_PPIASE_2"/>
    <property type="match status" value="1"/>
</dbReference>
<dbReference type="PROSITE" id="PS51257">
    <property type="entry name" value="PROKAR_LIPOPROTEIN"/>
    <property type="match status" value="1"/>
</dbReference>
<evidence type="ECO:0000255" key="1">
    <source>
        <dbReference type="HAMAP-Rule" id="MF_01145"/>
    </source>
</evidence>
<evidence type="ECO:0000256" key="2">
    <source>
        <dbReference type="SAM" id="MobiDB-lite"/>
    </source>
</evidence>
<evidence type="ECO:0007829" key="3">
    <source>
        <dbReference type="PDB" id="2JZV"/>
    </source>
</evidence>
<feature type="signal peptide" evidence="1">
    <location>
        <begin position="1"/>
        <end position="20"/>
    </location>
</feature>
<feature type="chain" id="PRO_0000029318" description="Foldase protein PrsA">
    <location>
        <begin position="21"/>
        <end position="320"/>
    </location>
</feature>
<feature type="domain" description="PpiC" evidence="1">
    <location>
        <begin position="139"/>
        <end position="245"/>
    </location>
</feature>
<feature type="region of interest" description="Disordered" evidence="2">
    <location>
        <begin position="159"/>
        <end position="198"/>
    </location>
</feature>
<feature type="lipid moiety-binding region" description="N-palmitoyl cysteine" evidence="1">
    <location>
        <position position="21"/>
    </location>
</feature>
<feature type="lipid moiety-binding region" description="S-diacylglycerol cysteine" evidence="1">
    <location>
        <position position="21"/>
    </location>
</feature>
<feature type="strand" evidence="3">
    <location>
        <begin position="140"/>
        <end position="151"/>
    </location>
</feature>
<feature type="strand" evidence="3">
    <location>
        <begin position="158"/>
        <end position="161"/>
    </location>
</feature>
<feature type="helix" evidence="3">
    <location>
        <begin position="163"/>
        <end position="178"/>
    </location>
</feature>
<feature type="helix" evidence="3">
    <location>
        <begin position="184"/>
        <end position="191"/>
    </location>
</feature>
<feature type="helix" evidence="3">
    <location>
        <begin position="195"/>
        <end position="198"/>
    </location>
</feature>
<feature type="turn" evidence="3">
    <location>
        <begin position="199"/>
        <end position="202"/>
    </location>
</feature>
<feature type="strand" evidence="3">
    <location>
        <begin position="203"/>
        <end position="208"/>
    </location>
</feature>
<feature type="helix" evidence="3">
    <location>
        <begin position="214"/>
        <end position="221"/>
    </location>
</feature>
<feature type="strand" evidence="3">
    <location>
        <begin position="232"/>
        <end position="234"/>
    </location>
</feature>
<feature type="strand" evidence="3">
    <location>
        <begin position="237"/>
        <end position="243"/>
    </location>
</feature>
<gene>
    <name evidence="1" type="primary">prsA</name>
    <name type="ordered locus">SAV1841</name>
</gene>
<keyword id="KW-0002">3D-structure</keyword>
<keyword id="KW-1003">Cell membrane</keyword>
<keyword id="KW-0413">Isomerase</keyword>
<keyword id="KW-0449">Lipoprotein</keyword>
<keyword id="KW-0472">Membrane</keyword>
<keyword id="KW-0564">Palmitate</keyword>
<keyword id="KW-0697">Rotamase</keyword>
<keyword id="KW-0732">Signal</keyword>
<protein>
    <recommendedName>
        <fullName evidence="1">Foldase protein PrsA</fullName>
        <ecNumber evidence="1">5.2.1.8</ecNumber>
    </recommendedName>
</protein>
<organism>
    <name type="scientific">Staphylococcus aureus (strain Mu50 / ATCC 700699)</name>
    <dbReference type="NCBI Taxonomy" id="158878"/>
    <lineage>
        <taxon>Bacteria</taxon>
        <taxon>Bacillati</taxon>
        <taxon>Bacillota</taxon>
        <taxon>Bacilli</taxon>
        <taxon>Bacillales</taxon>
        <taxon>Staphylococcaceae</taxon>
        <taxon>Staphylococcus</taxon>
    </lineage>
</organism>
<reference key="1">
    <citation type="journal article" date="2001" name="Lancet">
        <title>Whole genome sequencing of meticillin-resistant Staphylococcus aureus.</title>
        <authorList>
            <person name="Kuroda M."/>
            <person name="Ohta T."/>
            <person name="Uchiyama I."/>
            <person name="Baba T."/>
            <person name="Yuzawa H."/>
            <person name="Kobayashi I."/>
            <person name="Cui L."/>
            <person name="Oguchi A."/>
            <person name="Aoki K."/>
            <person name="Nagai Y."/>
            <person name="Lian J.-Q."/>
            <person name="Ito T."/>
            <person name="Kanamori M."/>
            <person name="Matsumaru H."/>
            <person name="Maruyama A."/>
            <person name="Murakami H."/>
            <person name="Hosoyama A."/>
            <person name="Mizutani-Ui Y."/>
            <person name="Takahashi N.K."/>
            <person name="Sawano T."/>
            <person name="Inoue R."/>
            <person name="Kaito C."/>
            <person name="Sekimizu K."/>
            <person name="Hirakawa H."/>
            <person name="Kuhara S."/>
            <person name="Goto S."/>
            <person name="Yabuzaki J."/>
            <person name="Kanehisa M."/>
            <person name="Yamashita A."/>
            <person name="Oshima K."/>
            <person name="Furuya K."/>
            <person name="Yoshino C."/>
            <person name="Shiba T."/>
            <person name="Hattori M."/>
            <person name="Ogasawara N."/>
            <person name="Hayashi H."/>
            <person name="Hiramatsu K."/>
        </authorList>
    </citation>
    <scope>NUCLEOTIDE SEQUENCE [LARGE SCALE GENOMIC DNA]</scope>
    <source>
        <strain>Mu50 / ATCC 700699</strain>
    </source>
</reference>